<keyword id="KW-0002">3D-structure</keyword>
<keyword id="KW-1003">Cell membrane</keyword>
<keyword id="KW-0963">Cytoplasm</keyword>
<keyword id="KW-1015">Disulfide bond</keyword>
<keyword id="KW-0967">Endosome</keyword>
<keyword id="KW-0378">Hydrolase</keyword>
<keyword id="KW-0449">Lipoprotein</keyword>
<keyword id="KW-0472">Membrane</keyword>
<keyword id="KW-0488">Methylation</keyword>
<keyword id="KW-0636">Prenylation</keyword>
<keyword id="KW-0904">Protein phosphatase</keyword>
<keyword id="KW-1185">Reference proteome</keyword>
<gene>
    <name type="primary">Ptp4a2</name>
    <name type="synonym">Prl2</name>
</gene>
<protein>
    <recommendedName>
        <fullName>Protein tyrosine phosphatase type IVA 2</fullName>
        <ecNumber>3.1.3.48</ecNumber>
    </recommendedName>
    <alternativeName>
        <fullName>Protein-tyrosine phosphatase 4a2</fullName>
    </alternativeName>
    <alternativeName>
        <fullName>Protein-tyrosine phosphatase of regenerating liver 2</fullName>
        <shortName>PRL-2</shortName>
    </alternativeName>
</protein>
<proteinExistence type="evidence at protein level"/>
<dbReference type="EC" id="3.1.3.48"/>
<dbReference type="EMBL" id="AF035644">
    <property type="protein sequence ID" value="AAC15874.1"/>
    <property type="molecule type" value="mRNA"/>
</dbReference>
<dbReference type="EMBL" id="AK033092">
    <property type="protein sequence ID" value="BAC28149.1"/>
    <property type="molecule type" value="mRNA"/>
</dbReference>
<dbReference type="EMBL" id="AK045093">
    <property type="protein sequence ID" value="BAC32217.1"/>
    <property type="molecule type" value="mRNA"/>
</dbReference>
<dbReference type="EMBL" id="AK155895">
    <property type="protein sequence ID" value="BAE33489.1"/>
    <property type="molecule type" value="mRNA"/>
</dbReference>
<dbReference type="EMBL" id="BC086794">
    <property type="protein sequence ID" value="AAH86794.1"/>
    <property type="molecule type" value="mRNA"/>
</dbReference>
<dbReference type="EMBL" id="BC087551">
    <property type="protein sequence ID" value="AAH87551.1"/>
    <property type="molecule type" value="mRNA"/>
</dbReference>
<dbReference type="CCDS" id="CCDS18704.1"/>
<dbReference type="PIR" id="JC5981">
    <property type="entry name" value="JC5981"/>
</dbReference>
<dbReference type="RefSeq" id="NP_001158217.1">
    <property type="nucleotide sequence ID" value="NM_001164745.2"/>
</dbReference>
<dbReference type="RefSeq" id="NP_001411752.1">
    <property type="nucleotide sequence ID" value="NM_001424823.1"/>
</dbReference>
<dbReference type="RefSeq" id="NP_001411753.1">
    <property type="nucleotide sequence ID" value="NM_001424824.1"/>
</dbReference>
<dbReference type="RefSeq" id="NP_033000.1">
    <property type="nucleotide sequence ID" value="NM_008974.5"/>
</dbReference>
<dbReference type="RefSeq" id="XP_017175534.1">
    <property type="nucleotide sequence ID" value="XM_017320045.3"/>
</dbReference>
<dbReference type="PDB" id="5K24">
    <property type="method" value="X-ray"/>
    <property type="resolution" value="3.10 A"/>
    <property type="chains" value="A/B=1-163"/>
</dbReference>
<dbReference type="PDBsum" id="5K24"/>
<dbReference type="BMRB" id="O70274"/>
<dbReference type="SMR" id="O70274"/>
<dbReference type="BioGRID" id="202474">
    <property type="interactions" value="2"/>
</dbReference>
<dbReference type="FunCoup" id="O70274">
    <property type="interactions" value="3519"/>
</dbReference>
<dbReference type="IntAct" id="O70274">
    <property type="interactions" value="1"/>
</dbReference>
<dbReference type="MINT" id="O70274"/>
<dbReference type="STRING" id="10090.ENSMUSP00000030578"/>
<dbReference type="iPTMnet" id="O70274"/>
<dbReference type="PhosphoSitePlus" id="O70274"/>
<dbReference type="SwissPalm" id="O70274"/>
<dbReference type="PaxDb" id="10090-ENSMUSP00000030578"/>
<dbReference type="PeptideAtlas" id="O70274"/>
<dbReference type="ProteomicsDB" id="258817"/>
<dbReference type="Pumba" id="O70274"/>
<dbReference type="Antibodypedia" id="4406">
    <property type="antibodies" value="204 antibodies from 29 providers"/>
</dbReference>
<dbReference type="DNASU" id="19244"/>
<dbReference type="Ensembl" id="ENSMUST00000030578.14">
    <property type="protein sequence ID" value="ENSMUSP00000030578.8"/>
    <property type="gene ID" value="ENSMUSG00000028788.15"/>
</dbReference>
<dbReference type="Ensembl" id="ENSMUST00000165853.2">
    <property type="protein sequence ID" value="ENSMUSP00000125901.2"/>
    <property type="gene ID" value="ENSMUSG00000028788.15"/>
</dbReference>
<dbReference type="GeneID" id="19244"/>
<dbReference type="KEGG" id="mmu:19244"/>
<dbReference type="UCSC" id="uc008uyf.2">
    <property type="organism name" value="mouse"/>
</dbReference>
<dbReference type="AGR" id="MGI:1277117"/>
<dbReference type="CTD" id="8073"/>
<dbReference type="MGI" id="MGI:1277117">
    <property type="gene designation" value="Ptp4a2"/>
</dbReference>
<dbReference type="VEuPathDB" id="HostDB:ENSMUSG00000028788"/>
<dbReference type="eggNOG" id="KOG2836">
    <property type="taxonomic scope" value="Eukaryota"/>
</dbReference>
<dbReference type="GeneTree" id="ENSGT00940000154383"/>
<dbReference type="HOGENOM" id="CLU_099263_2_0_1"/>
<dbReference type="InParanoid" id="O70274"/>
<dbReference type="OMA" id="RCCQQTY"/>
<dbReference type="OrthoDB" id="5632at2759"/>
<dbReference type="PhylomeDB" id="O70274"/>
<dbReference type="TreeFam" id="TF313384"/>
<dbReference type="Reactome" id="R-MMU-8873719">
    <property type="pathway name" value="RAB geranylgeranylation"/>
</dbReference>
<dbReference type="BioGRID-ORCS" id="19244">
    <property type="hits" value="4 hits in 78 CRISPR screens"/>
</dbReference>
<dbReference type="ChiTaRS" id="Ptp4a2">
    <property type="organism name" value="mouse"/>
</dbReference>
<dbReference type="PRO" id="PR:O70274"/>
<dbReference type="Proteomes" id="UP000000589">
    <property type="component" value="Chromosome 4"/>
</dbReference>
<dbReference type="RNAct" id="O70274">
    <property type="molecule type" value="protein"/>
</dbReference>
<dbReference type="Bgee" id="ENSMUSG00000028788">
    <property type="expression patterns" value="Expressed in embryonic post-anal tail and 265 other cell types or tissues"/>
</dbReference>
<dbReference type="GO" id="GO:0005829">
    <property type="term" value="C:cytosol"/>
    <property type="evidence" value="ECO:0000314"/>
    <property type="project" value="MGI"/>
</dbReference>
<dbReference type="GO" id="GO:0005769">
    <property type="term" value="C:early endosome"/>
    <property type="evidence" value="ECO:0007669"/>
    <property type="project" value="UniProtKB-SubCell"/>
</dbReference>
<dbReference type="GO" id="GO:0005886">
    <property type="term" value="C:plasma membrane"/>
    <property type="evidence" value="ECO:0007669"/>
    <property type="project" value="UniProtKB-SubCell"/>
</dbReference>
<dbReference type="GO" id="GO:0004857">
    <property type="term" value="F:enzyme inhibitor activity"/>
    <property type="evidence" value="ECO:0000314"/>
    <property type="project" value="MGI"/>
</dbReference>
<dbReference type="GO" id="GO:0004725">
    <property type="term" value="F:protein tyrosine phosphatase activity"/>
    <property type="evidence" value="ECO:0007669"/>
    <property type="project" value="UniProtKB-EC"/>
</dbReference>
<dbReference type="CDD" id="cd18536">
    <property type="entry name" value="PTP-IVa2"/>
    <property type="match status" value="1"/>
</dbReference>
<dbReference type="FunFam" id="3.90.190.10:FF:000012">
    <property type="entry name" value="protein tyrosine phosphatase type IVA 1"/>
    <property type="match status" value="1"/>
</dbReference>
<dbReference type="Gene3D" id="3.90.190.10">
    <property type="entry name" value="Protein tyrosine phosphatase superfamily"/>
    <property type="match status" value="1"/>
</dbReference>
<dbReference type="InterPro" id="IPR029021">
    <property type="entry name" value="Prot-tyrosine_phosphatase-like"/>
</dbReference>
<dbReference type="InterPro" id="IPR050561">
    <property type="entry name" value="PTP"/>
</dbReference>
<dbReference type="InterPro" id="IPR000242">
    <property type="entry name" value="PTP_cat"/>
</dbReference>
<dbReference type="InterPro" id="IPR003595">
    <property type="entry name" value="Tyr_Pase_cat"/>
</dbReference>
<dbReference type="InterPro" id="IPR000387">
    <property type="entry name" value="Tyr_Pase_dom"/>
</dbReference>
<dbReference type="InterPro" id="IPR020422">
    <property type="entry name" value="TYR_PHOSPHATASE_DUAL_dom"/>
</dbReference>
<dbReference type="PANTHER" id="PTHR23339">
    <property type="entry name" value="TYROSINE SPECIFIC PROTEIN PHOSPHATASE AND DUAL SPECIFICITY PROTEIN PHOSPHATASE"/>
    <property type="match status" value="1"/>
</dbReference>
<dbReference type="Pfam" id="PF00102">
    <property type="entry name" value="Y_phosphatase"/>
    <property type="match status" value="1"/>
</dbReference>
<dbReference type="SMART" id="SM00404">
    <property type="entry name" value="PTPc_motif"/>
    <property type="match status" value="1"/>
</dbReference>
<dbReference type="SUPFAM" id="SSF52799">
    <property type="entry name" value="(Phosphotyrosine protein) phosphatases II"/>
    <property type="match status" value="1"/>
</dbReference>
<dbReference type="PROSITE" id="PS50056">
    <property type="entry name" value="TYR_PHOSPHATASE_2"/>
    <property type="match status" value="1"/>
</dbReference>
<dbReference type="PROSITE" id="PS50054">
    <property type="entry name" value="TYR_PHOSPHATASE_DUAL"/>
    <property type="match status" value="1"/>
</dbReference>
<evidence type="ECO:0000250" key="1"/>
<evidence type="ECO:0000255" key="2">
    <source>
        <dbReference type="PROSITE-ProRule" id="PRU00160"/>
    </source>
</evidence>
<evidence type="ECO:0000269" key="3">
    <source>
    </source>
</evidence>
<evidence type="ECO:0000269" key="4">
    <source>
    </source>
</evidence>
<evidence type="ECO:0000305" key="5"/>
<evidence type="ECO:0007829" key="6">
    <source>
        <dbReference type="PDB" id="5K24"/>
    </source>
</evidence>
<feature type="chain" id="PRO_0000094786" description="Protein tyrosine phosphatase type IVA 2">
    <location>
        <begin position="1"/>
        <end position="164"/>
    </location>
</feature>
<feature type="propeptide" id="PRO_0000396732" description="Removed in mature form" evidence="5">
    <location>
        <begin position="165"/>
        <end position="167"/>
    </location>
</feature>
<feature type="domain" description="Tyrosine-protein phosphatase" evidence="2">
    <location>
        <begin position="5"/>
        <end position="158"/>
    </location>
</feature>
<feature type="active site" description="Proton donor" evidence="1">
    <location>
        <position position="69"/>
    </location>
</feature>
<feature type="active site" description="Phosphocysteine intermediate" evidence="2">
    <location>
        <position position="101"/>
    </location>
</feature>
<feature type="binding site" evidence="1">
    <location>
        <begin position="102"/>
        <end position="107"/>
    </location>
    <ligand>
        <name>phosphate</name>
        <dbReference type="ChEBI" id="CHEBI:43474"/>
    </ligand>
</feature>
<feature type="binding site" evidence="1">
    <location>
        <position position="107"/>
    </location>
    <ligand>
        <name>substrate</name>
    </ligand>
</feature>
<feature type="modified residue" description="Cysteine methyl ester" evidence="5">
    <location>
        <position position="164"/>
    </location>
</feature>
<feature type="lipid moiety-binding region" description="S-farnesyl cysteine" evidence="3">
    <location>
        <position position="164"/>
    </location>
</feature>
<feature type="disulfide bond" evidence="1">
    <location>
        <begin position="46"/>
        <end position="101"/>
    </location>
</feature>
<feature type="mutagenesis site" description="Locates in the nucleus." evidence="3">
    <location>
        <begin position="164"/>
        <end position="167"/>
    </location>
</feature>
<feature type="strand" evidence="6">
    <location>
        <begin position="7"/>
        <end position="11"/>
    </location>
</feature>
<feature type="strand" evidence="6">
    <location>
        <begin position="14"/>
        <end position="18"/>
    </location>
</feature>
<feature type="helix" evidence="6">
    <location>
        <begin position="27"/>
        <end position="37"/>
    </location>
</feature>
<feature type="strand" evidence="6">
    <location>
        <begin position="39"/>
        <end position="46"/>
    </location>
</feature>
<feature type="helix" evidence="6">
    <location>
        <begin position="53"/>
        <end position="56"/>
    </location>
</feature>
<feature type="turn" evidence="6">
    <location>
        <begin position="57"/>
        <end position="59"/>
    </location>
</feature>
<feature type="strand" evidence="6">
    <location>
        <begin position="61"/>
        <end position="64"/>
    </location>
</feature>
<feature type="helix" evidence="6">
    <location>
        <begin position="75"/>
        <end position="91"/>
    </location>
</feature>
<feature type="strand" evidence="6">
    <location>
        <begin position="96"/>
        <end position="100"/>
    </location>
</feature>
<feature type="strand" evidence="6">
    <location>
        <begin position="102"/>
        <end position="106"/>
    </location>
</feature>
<feature type="helix" evidence="6">
    <location>
        <begin position="107"/>
        <end position="118"/>
    </location>
</feature>
<feature type="helix" evidence="6">
    <location>
        <begin position="123"/>
        <end position="133"/>
    </location>
</feature>
<feature type="helix" evidence="6">
    <location>
        <begin position="140"/>
        <end position="148"/>
    </location>
</feature>
<organism>
    <name type="scientific">Mus musculus</name>
    <name type="common">Mouse</name>
    <dbReference type="NCBI Taxonomy" id="10090"/>
    <lineage>
        <taxon>Eukaryota</taxon>
        <taxon>Metazoa</taxon>
        <taxon>Chordata</taxon>
        <taxon>Craniata</taxon>
        <taxon>Vertebrata</taxon>
        <taxon>Euteleostomi</taxon>
        <taxon>Mammalia</taxon>
        <taxon>Eutheria</taxon>
        <taxon>Euarchontoglires</taxon>
        <taxon>Glires</taxon>
        <taxon>Rodentia</taxon>
        <taxon>Myomorpha</taxon>
        <taxon>Muroidea</taxon>
        <taxon>Muridae</taxon>
        <taxon>Murinae</taxon>
        <taxon>Mus</taxon>
        <taxon>Mus</taxon>
    </lineage>
</organism>
<reference key="1">
    <citation type="journal article" date="1998" name="Biochem. Biophys. Res. Commun.">
        <title>Mouse PRL-2 and PRL-3, two potentially prenylated protein tyrosine phosphatases homologous to PRL-1.</title>
        <authorList>
            <person name="Zeng Q."/>
            <person name="Hong W."/>
            <person name="Tan Y.H."/>
        </authorList>
    </citation>
    <scope>NUCLEOTIDE SEQUENCE [MRNA]</scope>
    <scope>TISSUE SPECIFICITY</scope>
</reference>
<reference key="2">
    <citation type="journal article" date="2005" name="Science">
        <title>The transcriptional landscape of the mammalian genome.</title>
        <authorList>
            <person name="Carninci P."/>
            <person name="Kasukawa T."/>
            <person name="Katayama S."/>
            <person name="Gough J."/>
            <person name="Frith M.C."/>
            <person name="Maeda N."/>
            <person name="Oyama R."/>
            <person name="Ravasi T."/>
            <person name="Lenhard B."/>
            <person name="Wells C."/>
            <person name="Kodzius R."/>
            <person name="Shimokawa K."/>
            <person name="Bajic V.B."/>
            <person name="Brenner S.E."/>
            <person name="Batalov S."/>
            <person name="Forrest A.R."/>
            <person name="Zavolan M."/>
            <person name="Davis M.J."/>
            <person name="Wilming L.G."/>
            <person name="Aidinis V."/>
            <person name="Allen J.E."/>
            <person name="Ambesi-Impiombato A."/>
            <person name="Apweiler R."/>
            <person name="Aturaliya R.N."/>
            <person name="Bailey T.L."/>
            <person name="Bansal M."/>
            <person name="Baxter L."/>
            <person name="Beisel K.W."/>
            <person name="Bersano T."/>
            <person name="Bono H."/>
            <person name="Chalk A.M."/>
            <person name="Chiu K.P."/>
            <person name="Choudhary V."/>
            <person name="Christoffels A."/>
            <person name="Clutterbuck D.R."/>
            <person name="Crowe M.L."/>
            <person name="Dalla E."/>
            <person name="Dalrymple B.P."/>
            <person name="de Bono B."/>
            <person name="Della Gatta G."/>
            <person name="di Bernardo D."/>
            <person name="Down T."/>
            <person name="Engstrom P."/>
            <person name="Fagiolini M."/>
            <person name="Faulkner G."/>
            <person name="Fletcher C.F."/>
            <person name="Fukushima T."/>
            <person name="Furuno M."/>
            <person name="Futaki S."/>
            <person name="Gariboldi M."/>
            <person name="Georgii-Hemming P."/>
            <person name="Gingeras T.R."/>
            <person name="Gojobori T."/>
            <person name="Green R.E."/>
            <person name="Gustincich S."/>
            <person name="Harbers M."/>
            <person name="Hayashi Y."/>
            <person name="Hensch T.K."/>
            <person name="Hirokawa N."/>
            <person name="Hill D."/>
            <person name="Huminiecki L."/>
            <person name="Iacono M."/>
            <person name="Ikeo K."/>
            <person name="Iwama A."/>
            <person name="Ishikawa T."/>
            <person name="Jakt M."/>
            <person name="Kanapin A."/>
            <person name="Katoh M."/>
            <person name="Kawasawa Y."/>
            <person name="Kelso J."/>
            <person name="Kitamura H."/>
            <person name="Kitano H."/>
            <person name="Kollias G."/>
            <person name="Krishnan S.P."/>
            <person name="Kruger A."/>
            <person name="Kummerfeld S.K."/>
            <person name="Kurochkin I.V."/>
            <person name="Lareau L.F."/>
            <person name="Lazarevic D."/>
            <person name="Lipovich L."/>
            <person name="Liu J."/>
            <person name="Liuni S."/>
            <person name="McWilliam S."/>
            <person name="Madan Babu M."/>
            <person name="Madera M."/>
            <person name="Marchionni L."/>
            <person name="Matsuda H."/>
            <person name="Matsuzawa S."/>
            <person name="Miki H."/>
            <person name="Mignone F."/>
            <person name="Miyake S."/>
            <person name="Morris K."/>
            <person name="Mottagui-Tabar S."/>
            <person name="Mulder N."/>
            <person name="Nakano N."/>
            <person name="Nakauchi H."/>
            <person name="Ng P."/>
            <person name="Nilsson R."/>
            <person name="Nishiguchi S."/>
            <person name="Nishikawa S."/>
            <person name="Nori F."/>
            <person name="Ohara O."/>
            <person name="Okazaki Y."/>
            <person name="Orlando V."/>
            <person name="Pang K.C."/>
            <person name="Pavan W.J."/>
            <person name="Pavesi G."/>
            <person name="Pesole G."/>
            <person name="Petrovsky N."/>
            <person name="Piazza S."/>
            <person name="Reed J."/>
            <person name="Reid J.F."/>
            <person name="Ring B.Z."/>
            <person name="Ringwald M."/>
            <person name="Rost B."/>
            <person name="Ruan Y."/>
            <person name="Salzberg S.L."/>
            <person name="Sandelin A."/>
            <person name="Schneider C."/>
            <person name="Schoenbach C."/>
            <person name="Sekiguchi K."/>
            <person name="Semple C.A."/>
            <person name="Seno S."/>
            <person name="Sessa L."/>
            <person name="Sheng Y."/>
            <person name="Shibata Y."/>
            <person name="Shimada H."/>
            <person name="Shimada K."/>
            <person name="Silva D."/>
            <person name="Sinclair B."/>
            <person name="Sperling S."/>
            <person name="Stupka E."/>
            <person name="Sugiura K."/>
            <person name="Sultana R."/>
            <person name="Takenaka Y."/>
            <person name="Taki K."/>
            <person name="Tammoja K."/>
            <person name="Tan S.L."/>
            <person name="Tang S."/>
            <person name="Taylor M.S."/>
            <person name="Tegner J."/>
            <person name="Teichmann S.A."/>
            <person name="Ueda H.R."/>
            <person name="van Nimwegen E."/>
            <person name="Verardo R."/>
            <person name="Wei C.L."/>
            <person name="Yagi K."/>
            <person name="Yamanishi H."/>
            <person name="Zabarovsky E."/>
            <person name="Zhu S."/>
            <person name="Zimmer A."/>
            <person name="Hide W."/>
            <person name="Bult C."/>
            <person name="Grimmond S.M."/>
            <person name="Teasdale R.D."/>
            <person name="Liu E.T."/>
            <person name="Brusic V."/>
            <person name="Quackenbush J."/>
            <person name="Wahlestedt C."/>
            <person name="Mattick J.S."/>
            <person name="Hume D.A."/>
            <person name="Kai C."/>
            <person name="Sasaki D."/>
            <person name="Tomaru Y."/>
            <person name="Fukuda S."/>
            <person name="Kanamori-Katayama M."/>
            <person name="Suzuki M."/>
            <person name="Aoki J."/>
            <person name="Arakawa T."/>
            <person name="Iida J."/>
            <person name="Imamura K."/>
            <person name="Itoh M."/>
            <person name="Kato T."/>
            <person name="Kawaji H."/>
            <person name="Kawagashira N."/>
            <person name="Kawashima T."/>
            <person name="Kojima M."/>
            <person name="Kondo S."/>
            <person name="Konno H."/>
            <person name="Nakano K."/>
            <person name="Ninomiya N."/>
            <person name="Nishio T."/>
            <person name="Okada M."/>
            <person name="Plessy C."/>
            <person name="Shibata K."/>
            <person name="Shiraki T."/>
            <person name="Suzuki S."/>
            <person name="Tagami M."/>
            <person name="Waki K."/>
            <person name="Watahiki A."/>
            <person name="Okamura-Oho Y."/>
            <person name="Suzuki H."/>
            <person name="Kawai J."/>
            <person name="Hayashizaki Y."/>
        </authorList>
    </citation>
    <scope>NUCLEOTIDE SEQUENCE [LARGE SCALE MRNA]</scope>
    <source>
        <strain>C57BL/6J</strain>
        <tissue>Testis</tissue>
    </source>
</reference>
<reference key="3">
    <citation type="journal article" date="2004" name="Genome Res.">
        <title>The status, quality, and expansion of the NIH full-length cDNA project: the Mammalian Gene Collection (MGC).</title>
        <authorList>
            <consortium name="The MGC Project Team"/>
        </authorList>
    </citation>
    <scope>NUCLEOTIDE SEQUENCE [LARGE SCALE MRNA]</scope>
    <source>
        <strain>C57BL/6J</strain>
        <tissue>Brain</tissue>
        <tissue>Embryo</tissue>
    </source>
</reference>
<reference key="4">
    <citation type="journal article" date="2000" name="J. Biol. Chem.">
        <title>Prenylation-dependent association of protein-tyrosine phosphatases PRL-1, -2, and -3 with the plasma membrane and the early endosome.</title>
        <authorList>
            <person name="Zeng Q."/>
            <person name="Si X."/>
            <person name="Horstmann H."/>
            <person name="Xu Y."/>
            <person name="Hong W."/>
            <person name="Pallen C.J."/>
        </authorList>
    </citation>
    <scope>ISOPRENYLATION AT CYS-164</scope>
    <scope>SUBCELLULAR LOCATION</scope>
    <scope>MUTAGENESIS OF 164-CYS--GLN-167</scope>
</reference>
<reference key="5">
    <citation type="journal article" date="2010" name="Cell">
        <title>A tissue-specific atlas of mouse protein phosphorylation and expression.</title>
        <authorList>
            <person name="Huttlin E.L."/>
            <person name="Jedrychowski M.P."/>
            <person name="Elias J.E."/>
            <person name="Goswami T."/>
            <person name="Rad R."/>
            <person name="Beausoleil S.A."/>
            <person name="Villen J."/>
            <person name="Haas W."/>
            <person name="Sowa M.E."/>
            <person name="Gygi S.P."/>
        </authorList>
    </citation>
    <scope>IDENTIFICATION BY MASS SPECTROMETRY [LARGE SCALE ANALYSIS]</scope>
    <source>
        <tissue>Brain</tissue>
        <tissue>Kidney</tissue>
        <tissue>Liver</tissue>
        <tissue>Lung</tissue>
        <tissue>Spleen</tissue>
        <tissue>Testis</tissue>
    </source>
</reference>
<comment type="function">
    <text evidence="1">Protein tyrosine phosphatase which stimulates progression from G1 into S phase during mitosis. Inhibits geranylgeranyl transferase type II activity by blocking the association between RABGGTA and RABGGTB (By similarity).</text>
</comment>
<comment type="catalytic activity">
    <reaction>
        <text>O-phospho-L-tyrosyl-[protein] + H2O = L-tyrosyl-[protein] + phosphate</text>
        <dbReference type="Rhea" id="RHEA:10684"/>
        <dbReference type="Rhea" id="RHEA-COMP:10136"/>
        <dbReference type="Rhea" id="RHEA-COMP:20101"/>
        <dbReference type="ChEBI" id="CHEBI:15377"/>
        <dbReference type="ChEBI" id="CHEBI:43474"/>
        <dbReference type="ChEBI" id="CHEBI:46858"/>
        <dbReference type="ChEBI" id="CHEBI:61978"/>
        <dbReference type="EC" id="3.1.3.48"/>
    </reaction>
</comment>
<comment type="activity regulation">
    <text evidence="1">Inhibited by sodium orthovanadate and pentamidine.</text>
</comment>
<comment type="subunit">
    <text evidence="1">In contrast to PTP4A1 and PTP4A3, does not interact with tubulin. Interacts with RABGGTB (By similarity).</text>
</comment>
<comment type="subcellular location">
    <subcellularLocation>
        <location evidence="3">Cell membrane</location>
    </subcellularLocation>
    <subcellularLocation>
        <location evidence="3">Early endosome</location>
    </subcellularLocation>
    <subcellularLocation>
        <location evidence="3">Cytoplasm</location>
    </subcellularLocation>
</comment>
<comment type="tissue specificity">
    <text evidence="4">Expressed in skeletal muscle, and at lower levels in liver, lung, heart, kidney, brain, testis and spleen.</text>
</comment>
<comment type="PTM">
    <text evidence="1">Farnesylated. Farnesylation is required for membrane targeting and for interaction with RABGGTB (By similarity).</text>
</comment>
<comment type="similarity">
    <text evidence="5">Belongs to the protein-tyrosine phosphatase family.</text>
</comment>
<name>TP4A2_MOUSE</name>
<sequence>MNRPAPVEISYENMRFLITHNPTNATLNKFTEELKKYGVTTLVRVCDATYDKAPVEKEGIHVLDWPFDDGAPPPNQIVDDWLNLLKTKFREEPGCCVAVHCVAGLGRAPVLVALALIECGMKYEDAVQFIRQKRRGAFNSKQLLYLEKYRPKMRLRFRDTNGHCCVQ</sequence>
<accession>O70274</accession>
<accession>Q3U1K7</accession>